<accession>H2DH17</accession>
<proteinExistence type="evidence at transcript level"/>
<keyword id="KW-0349">Heme</keyword>
<keyword id="KW-0408">Iron</keyword>
<keyword id="KW-0472">Membrane</keyword>
<keyword id="KW-0479">Metal-binding</keyword>
<keyword id="KW-0503">Monooxygenase</keyword>
<keyword id="KW-0560">Oxidoreductase</keyword>
<keyword id="KW-0812">Transmembrane</keyword>
<keyword id="KW-1133">Transmembrane helix</keyword>
<comment type="function">
    <text evidence="1">Probable heme-thiolate monooxygenase.</text>
</comment>
<comment type="cofactor">
    <cofactor evidence="1">
        <name>heme</name>
        <dbReference type="ChEBI" id="CHEBI:30413"/>
    </cofactor>
</comment>
<comment type="subcellular location">
    <subcellularLocation>
        <location evidence="4">Membrane</location>
        <topology evidence="4">Single-pass membrane protein</topology>
    </subcellularLocation>
</comment>
<comment type="induction">
    <text evidence="3">Up-regulated by methyl jasmonate (MeJA).</text>
</comment>
<comment type="similarity">
    <text evidence="4">Belongs to the cytochrome P450 family.</text>
</comment>
<comment type="caution">
    <text evidence="5">Reported as CYP749A22 in the publication but submitted as CYP749A20.</text>
</comment>
<reference key="1">
    <citation type="journal article" date="2011" name="Plant Cell Physiol.">
        <title>The Cyt P450 enzyme CYP716A47 catalyzes the formation of protopanaxadiol from dammarenediol-II during ginsenoside biosynthesis in Panax ginseng.</title>
        <authorList>
            <person name="Han J.Y."/>
            <person name="Kim H.J."/>
            <person name="Kwon Y.S."/>
            <person name="Choi Y.E."/>
        </authorList>
    </citation>
    <scope>NUCLEOTIDE SEQUENCE [MRNA]</scope>
    <scope>INDUCTION</scope>
</reference>
<dbReference type="EC" id="1.14.-.-"/>
<dbReference type="EMBL" id="JN604538">
    <property type="protein sequence ID" value="AEY75214.1"/>
    <property type="molecule type" value="mRNA"/>
</dbReference>
<dbReference type="SMR" id="H2DH17"/>
<dbReference type="GO" id="GO:0016020">
    <property type="term" value="C:membrane"/>
    <property type="evidence" value="ECO:0007669"/>
    <property type="project" value="UniProtKB-SubCell"/>
</dbReference>
<dbReference type="GO" id="GO:0020037">
    <property type="term" value="F:heme binding"/>
    <property type="evidence" value="ECO:0007669"/>
    <property type="project" value="InterPro"/>
</dbReference>
<dbReference type="GO" id="GO:0005506">
    <property type="term" value="F:iron ion binding"/>
    <property type="evidence" value="ECO:0007669"/>
    <property type="project" value="InterPro"/>
</dbReference>
<dbReference type="GO" id="GO:0004497">
    <property type="term" value="F:monooxygenase activity"/>
    <property type="evidence" value="ECO:0007669"/>
    <property type="project" value="UniProtKB-KW"/>
</dbReference>
<dbReference type="GO" id="GO:0016705">
    <property type="term" value="F:oxidoreductase activity, acting on paired donors, with incorporation or reduction of molecular oxygen"/>
    <property type="evidence" value="ECO:0007669"/>
    <property type="project" value="InterPro"/>
</dbReference>
<dbReference type="CDD" id="cd11052">
    <property type="entry name" value="CYP72_clan"/>
    <property type="match status" value="1"/>
</dbReference>
<dbReference type="Gene3D" id="1.10.630.10">
    <property type="entry name" value="Cytochrome P450"/>
    <property type="match status" value="1"/>
</dbReference>
<dbReference type="InterPro" id="IPR001128">
    <property type="entry name" value="Cyt_P450"/>
</dbReference>
<dbReference type="InterPro" id="IPR017972">
    <property type="entry name" value="Cyt_P450_CS"/>
</dbReference>
<dbReference type="InterPro" id="IPR002401">
    <property type="entry name" value="Cyt_P450_E_grp-I"/>
</dbReference>
<dbReference type="InterPro" id="IPR036396">
    <property type="entry name" value="Cyt_P450_sf"/>
</dbReference>
<dbReference type="InterPro" id="IPR050665">
    <property type="entry name" value="Cytochrome_P450_Monooxygen"/>
</dbReference>
<dbReference type="PANTHER" id="PTHR24282:SF20">
    <property type="entry name" value="CYTOCHROME P450 CYP749A22-LIKE"/>
    <property type="match status" value="1"/>
</dbReference>
<dbReference type="PANTHER" id="PTHR24282">
    <property type="entry name" value="CYTOCHROME P450 FAMILY MEMBER"/>
    <property type="match status" value="1"/>
</dbReference>
<dbReference type="Pfam" id="PF00067">
    <property type="entry name" value="p450"/>
    <property type="match status" value="1"/>
</dbReference>
<dbReference type="PRINTS" id="PR00463">
    <property type="entry name" value="EP450I"/>
</dbReference>
<dbReference type="PRINTS" id="PR00385">
    <property type="entry name" value="P450"/>
</dbReference>
<dbReference type="SUPFAM" id="SSF48264">
    <property type="entry name" value="Cytochrome P450"/>
    <property type="match status" value="1"/>
</dbReference>
<dbReference type="PROSITE" id="PS00086">
    <property type="entry name" value="CYTOCHROME_P450"/>
    <property type="match status" value="1"/>
</dbReference>
<evidence type="ECO:0000250" key="1"/>
<evidence type="ECO:0000255" key="2"/>
<evidence type="ECO:0000269" key="3">
    <source>
    </source>
</evidence>
<evidence type="ECO:0000305" key="4"/>
<evidence type="ECO:0000305" key="5">
    <source>
    </source>
</evidence>
<feature type="chain" id="PRO_0000425873" description="Cytochrome P450 CYP749A22">
    <location>
        <begin position="1"/>
        <end position="524"/>
    </location>
</feature>
<feature type="transmembrane region" description="Helical" evidence="2">
    <location>
        <begin position="12"/>
        <end position="32"/>
    </location>
</feature>
<feature type="binding site" description="axial binding residue" evidence="1">
    <location>
        <position position="472"/>
    </location>
    <ligand>
        <name>heme</name>
        <dbReference type="ChEBI" id="CHEBI:30413"/>
    </ligand>
    <ligandPart>
        <name>Fe</name>
        <dbReference type="ChEBI" id="CHEBI:18248"/>
    </ligandPart>
</feature>
<sequence>MSWNNIGVVEMTPILFQFLLSSLCVFLLFVFIRFLNDIWWTPIRLQRVFRQQGIRGPSYGFLYGNTKEILNMRKESMSRPMDYLSHNIFPRLQPHLYSWLNIYGKNFLNWYGPRAQFVVTQVDFVKETMIKDQAYPKMDPEWFAKKLLGDGIVTSKGKKWAKHRRLANHAFHAESLKSMTPAMIASVEMMLKRWKQHEGREIDVFQEFKILTSEVISRTAFGSSYLDGKDIFDRLTQLGIIITRNSYKVKLPGISLFYKSNDEIEAEKLDQGLYDSILRIMEKREKESTMSGEVGSFGTDFLGLLMKAMNDADEKNRITAQDVVDECKTFYVAGQETTTTLLAWVIFLLGIHTDWQEKARQEVLNLFGQEIPNSDGLAKLKTVNMIINETLRLYPPVIFLTRKVKEETKFGKLTLPANVHIVVPTLALHHDEQIWGDDALLFKPERFSQGVAKATNNNAAAFFPFGLGPRSCVGLNFATNEAKIALAMILQCYSFALSPTYIHSPVQILTVRPQHGLQVMLQPL</sequence>
<organism>
    <name type="scientific">Panax ginseng</name>
    <name type="common">Korean ginseng</name>
    <dbReference type="NCBI Taxonomy" id="4054"/>
    <lineage>
        <taxon>Eukaryota</taxon>
        <taxon>Viridiplantae</taxon>
        <taxon>Streptophyta</taxon>
        <taxon>Embryophyta</taxon>
        <taxon>Tracheophyta</taxon>
        <taxon>Spermatophyta</taxon>
        <taxon>Magnoliopsida</taxon>
        <taxon>eudicotyledons</taxon>
        <taxon>Gunneridae</taxon>
        <taxon>Pentapetalae</taxon>
        <taxon>asterids</taxon>
        <taxon>campanulids</taxon>
        <taxon>Apiales</taxon>
        <taxon>Araliaceae</taxon>
        <taxon>Panax</taxon>
    </lineage>
</organism>
<name>C7A22_PANGI</name>
<protein>
    <recommendedName>
        <fullName>Cytochrome P450 CYP749A22</fullName>
        <ecNumber>1.14.-.-</ecNumber>
    </recommendedName>
    <alternativeName>
        <fullName>Cytochrome P450 CYP749A20</fullName>
    </alternativeName>
</protein>